<accession>Q5QUU1</accession>
<feature type="chain" id="PRO_0000163467" description="Large ribosomal subunit protein bL19">
    <location>
        <begin position="1"/>
        <end position="119"/>
    </location>
</feature>
<evidence type="ECO:0000255" key="1">
    <source>
        <dbReference type="HAMAP-Rule" id="MF_00402"/>
    </source>
</evidence>
<evidence type="ECO:0000305" key="2"/>
<protein>
    <recommendedName>
        <fullName evidence="1">Large ribosomal subunit protein bL19</fullName>
    </recommendedName>
    <alternativeName>
        <fullName evidence="2">50S ribosomal protein L19</fullName>
    </alternativeName>
</protein>
<organism>
    <name type="scientific">Idiomarina loihiensis (strain ATCC BAA-735 / DSM 15497 / L2-TR)</name>
    <dbReference type="NCBI Taxonomy" id="283942"/>
    <lineage>
        <taxon>Bacteria</taxon>
        <taxon>Pseudomonadati</taxon>
        <taxon>Pseudomonadota</taxon>
        <taxon>Gammaproteobacteria</taxon>
        <taxon>Alteromonadales</taxon>
        <taxon>Idiomarinaceae</taxon>
        <taxon>Idiomarina</taxon>
    </lineage>
</organism>
<gene>
    <name evidence="1" type="primary">rplS</name>
    <name type="ordered locus">IL1723</name>
</gene>
<reference key="1">
    <citation type="journal article" date="2004" name="Proc. Natl. Acad. Sci. U.S.A.">
        <title>Genome sequence of the deep-sea gamma-proteobacterium Idiomarina loihiensis reveals amino acid fermentation as a source of carbon and energy.</title>
        <authorList>
            <person name="Hou S."/>
            <person name="Saw J.H."/>
            <person name="Lee K.S."/>
            <person name="Freitas T.A."/>
            <person name="Belisle C."/>
            <person name="Kawarabayasi Y."/>
            <person name="Donachie S.P."/>
            <person name="Pikina A."/>
            <person name="Galperin M.Y."/>
            <person name="Koonin E.V."/>
            <person name="Makarova K.S."/>
            <person name="Omelchenko M.V."/>
            <person name="Sorokin A."/>
            <person name="Wolf Y.I."/>
            <person name="Li Q.X."/>
            <person name="Keum Y.S."/>
            <person name="Campbell S."/>
            <person name="Denery J."/>
            <person name="Aizawa S."/>
            <person name="Shibata S."/>
            <person name="Malahoff A."/>
            <person name="Alam M."/>
        </authorList>
    </citation>
    <scope>NUCLEOTIDE SEQUENCE [LARGE SCALE GENOMIC DNA]</scope>
    <source>
        <strain>ATCC BAA-735 / DSM 15497 / L2-TR</strain>
    </source>
</reference>
<name>RL19_IDILO</name>
<comment type="function">
    <text evidence="1">This protein is located at the 30S-50S ribosomal subunit interface and may play a role in the structure and function of the aminoacyl-tRNA binding site.</text>
</comment>
<comment type="similarity">
    <text evidence="1">Belongs to the bacterial ribosomal protein bL19 family.</text>
</comment>
<proteinExistence type="inferred from homology"/>
<keyword id="KW-1185">Reference proteome</keyword>
<keyword id="KW-0687">Ribonucleoprotein</keyword>
<keyword id="KW-0689">Ribosomal protein</keyword>
<sequence>MAKVSQSIIKALEEEQMKQDLPEFAPGDTVVVNVKVKEGNRERLQAFEGVVIRVRNRGLHSAFTVRKVSNGEGVERTFQTHSPLVDSIKVKRRGAVRRAKLYYLRERSGKSARIREKLS</sequence>
<dbReference type="EMBL" id="AE017340">
    <property type="protein sequence ID" value="AAV82556.1"/>
    <property type="molecule type" value="Genomic_DNA"/>
</dbReference>
<dbReference type="RefSeq" id="WP_011234959.1">
    <property type="nucleotide sequence ID" value="NC_006512.1"/>
</dbReference>
<dbReference type="SMR" id="Q5QUU1"/>
<dbReference type="STRING" id="283942.IL1723"/>
<dbReference type="GeneID" id="41336898"/>
<dbReference type="KEGG" id="ilo:IL1723"/>
<dbReference type="eggNOG" id="COG0335">
    <property type="taxonomic scope" value="Bacteria"/>
</dbReference>
<dbReference type="HOGENOM" id="CLU_103507_2_2_6"/>
<dbReference type="OrthoDB" id="9803541at2"/>
<dbReference type="Proteomes" id="UP000001171">
    <property type="component" value="Chromosome"/>
</dbReference>
<dbReference type="GO" id="GO:0022625">
    <property type="term" value="C:cytosolic large ribosomal subunit"/>
    <property type="evidence" value="ECO:0007669"/>
    <property type="project" value="TreeGrafter"/>
</dbReference>
<dbReference type="GO" id="GO:0003735">
    <property type="term" value="F:structural constituent of ribosome"/>
    <property type="evidence" value="ECO:0007669"/>
    <property type="project" value="InterPro"/>
</dbReference>
<dbReference type="GO" id="GO:0006412">
    <property type="term" value="P:translation"/>
    <property type="evidence" value="ECO:0007669"/>
    <property type="project" value="UniProtKB-UniRule"/>
</dbReference>
<dbReference type="FunFam" id="2.30.30.790:FF:000001">
    <property type="entry name" value="50S ribosomal protein L19"/>
    <property type="match status" value="1"/>
</dbReference>
<dbReference type="Gene3D" id="2.30.30.790">
    <property type="match status" value="1"/>
</dbReference>
<dbReference type="HAMAP" id="MF_00402">
    <property type="entry name" value="Ribosomal_bL19"/>
    <property type="match status" value="1"/>
</dbReference>
<dbReference type="InterPro" id="IPR001857">
    <property type="entry name" value="Ribosomal_bL19"/>
</dbReference>
<dbReference type="InterPro" id="IPR018257">
    <property type="entry name" value="Ribosomal_bL19_CS"/>
</dbReference>
<dbReference type="InterPro" id="IPR038657">
    <property type="entry name" value="Ribosomal_bL19_sf"/>
</dbReference>
<dbReference type="InterPro" id="IPR008991">
    <property type="entry name" value="Translation_prot_SH3-like_sf"/>
</dbReference>
<dbReference type="NCBIfam" id="TIGR01024">
    <property type="entry name" value="rplS_bact"/>
    <property type="match status" value="1"/>
</dbReference>
<dbReference type="PANTHER" id="PTHR15680:SF9">
    <property type="entry name" value="LARGE RIBOSOMAL SUBUNIT PROTEIN BL19M"/>
    <property type="match status" value="1"/>
</dbReference>
<dbReference type="PANTHER" id="PTHR15680">
    <property type="entry name" value="RIBOSOMAL PROTEIN L19"/>
    <property type="match status" value="1"/>
</dbReference>
<dbReference type="Pfam" id="PF01245">
    <property type="entry name" value="Ribosomal_L19"/>
    <property type="match status" value="1"/>
</dbReference>
<dbReference type="PIRSF" id="PIRSF002191">
    <property type="entry name" value="Ribosomal_L19"/>
    <property type="match status" value="1"/>
</dbReference>
<dbReference type="PRINTS" id="PR00061">
    <property type="entry name" value="RIBOSOMALL19"/>
</dbReference>
<dbReference type="SUPFAM" id="SSF50104">
    <property type="entry name" value="Translation proteins SH3-like domain"/>
    <property type="match status" value="1"/>
</dbReference>
<dbReference type="PROSITE" id="PS01015">
    <property type="entry name" value="RIBOSOMAL_L19"/>
    <property type="match status" value="1"/>
</dbReference>